<proteinExistence type="inferred from homology"/>
<dbReference type="EC" id="3.1.-.-" evidence="1"/>
<dbReference type="EMBL" id="AP010656">
    <property type="protein sequence ID" value="BAG83399.1"/>
    <property type="molecule type" value="Genomic_DNA"/>
</dbReference>
<dbReference type="RefSeq" id="WP_012573160.1">
    <property type="nucleotide sequence ID" value="NC_011565.1"/>
</dbReference>
<dbReference type="SMR" id="B6YQC7"/>
<dbReference type="STRING" id="511995.CFPG_136"/>
<dbReference type="KEGG" id="aps:CFPG_136"/>
<dbReference type="eggNOG" id="COG0816">
    <property type="taxonomic scope" value="Bacteria"/>
</dbReference>
<dbReference type="HOGENOM" id="CLU_098240_2_1_10"/>
<dbReference type="OrthoDB" id="9796140at2"/>
<dbReference type="Proteomes" id="UP000000723">
    <property type="component" value="Chromosome"/>
</dbReference>
<dbReference type="GO" id="GO:0005829">
    <property type="term" value="C:cytosol"/>
    <property type="evidence" value="ECO:0007669"/>
    <property type="project" value="TreeGrafter"/>
</dbReference>
<dbReference type="GO" id="GO:0004518">
    <property type="term" value="F:nuclease activity"/>
    <property type="evidence" value="ECO:0007669"/>
    <property type="project" value="UniProtKB-KW"/>
</dbReference>
<dbReference type="GO" id="GO:0000967">
    <property type="term" value="P:rRNA 5'-end processing"/>
    <property type="evidence" value="ECO:0007669"/>
    <property type="project" value="UniProtKB-UniRule"/>
</dbReference>
<dbReference type="CDD" id="cd16964">
    <property type="entry name" value="YqgF"/>
    <property type="match status" value="1"/>
</dbReference>
<dbReference type="Gene3D" id="3.30.420.140">
    <property type="entry name" value="YqgF/RNase H-like domain"/>
    <property type="match status" value="1"/>
</dbReference>
<dbReference type="HAMAP" id="MF_00651">
    <property type="entry name" value="Nuclease_YqgF"/>
    <property type="match status" value="1"/>
</dbReference>
<dbReference type="InterPro" id="IPR012337">
    <property type="entry name" value="RNaseH-like_sf"/>
</dbReference>
<dbReference type="InterPro" id="IPR005227">
    <property type="entry name" value="YqgF"/>
</dbReference>
<dbReference type="InterPro" id="IPR006641">
    <property type="entry name" value="YqgF/RNaseH-like_dom"/>
</dbReference>
<dbReference type="InterPro" id="IPR037027">
    <property type="entry name" value="YqgF/RNaseH-like_dom_sf"/>
</dbReference>
<dbReference type="NCBIfam" id="TIGR00250">
    <property type="entry name" value="RNAse_H_YqgF"/>
    <property type="match status" value="1"/>
</dbReference>
<dbReference type="PANTHER" id="PTHR33317">
    <property type="entry name" value="POLYNUCLEOTIDYL TRANSFERASE, RIBONUCLEASE H-LIKE SUPERFAMILY PROTEIN"/>
    <property type="match status" value="1"/>
</dbReference>
<dbReference type="PANTHER" id="PTHR33317:SF4">
    <property type="entry name" value="POLYNUCLEOTIDYL TRANSFERASE, RIBONUCLEASE H-LIKE SUPERFAMILY PROTEIN"/>
    <property type="match status" value="1"/>
</dbReference>
<dbReference type="Pfam" id="PF03652">
    <property type="entry name" value="RuvX"/>
    <property type="match status" value="1"/>
</dbReference>
<dbReference type="SMART" id="SM00732">
    <property type="entry name" value="YqgFc"/>
    <property type="match status" value="1"/>
</dbReference>
<dbReference type="SUPFAM" id="SSF53098">
    <property type="entry name" value="Ribonuclease H-like"/>
    <property type="match status" value="1"/>
</dbReference>
<protein>
    <recommendedName>
        <fullName evidence="1">Putative pre-16S rRNA nuclease</fullName>
        <ecNumber evidence="1">3.1.-.-</ecNumber>
    </recommendedName>
</protein>
<feature type="chain" id="PRO_1000130994" description="Putative pre-16S rRNA nuclease">
    <location>
        <begin position="1"/>
        <end position="138"/>
    </location>
</feature>
<comment type="function">
    <text evidence="1">Could be a nuclease involved in processing of the 5'-end of pre-16S rRNA.</text>
</comment>
<comment type="subcellular location">
    <subcellularLocation>
        <location evidence="1">Cytoplasm</location>
    </subcellularLocation>
</comment>
<comment type="similarity">
    <text evidence="1">Belongs to the YqgF nuclease family.</text>
</comment>
<gene>
    <name type="ordered locus">CFPG_136</name>
</gene>
<reference key="1">
    <citation type="journal article" date="2008" name="Science">
        <title>Genome of an endosymbiont coupling N2 fixation to cellulolysis within RT protist cells in termite gut.</title>
        <authorList>
            <person name="Hongoh Y."/>
            <person name="Sharma V.K."/>
            <person name="Prakash T."/>
            <person name="Noda S."/>
            <person name="Toh H."/>
            <person name="Taylor T.D."/>
            <person name="Kudo T."/>
            <person name="Sakaki Y."/>
            <person name="Toyoda A."/>
            <person name="Hattori M."/>
            <person name="Ohkuma M."/>
        </authorList>
    </citation>
    <scope>NUCLEOTIDE SEQUENCE [LARGE SCALE GENOMIC DNA]</scope>
</reference>
<accession>B6YQC7</accession>
<name>YQGF_AZOPC</name>
<sequence>MGRIVAIDYGEKRTGFAISDPLKMIVSSFVTVLSRKAVMYLKNCTENYDIELFVLGEPRQMDYTPSENMPRVEKFKRNLRRVIPSIDVQMVDERFTSVLAHRIMIEGGVKKIKRQDKGLVDRLSAAILLQTYLEFLRK</sequence>
<evidence type="ECO:0000255" key="1">
    <source>
        <dbReference type="HAMAP-Rule" id="MF_00651"/>
    </source>
</evidence>
<organism>
    <name type="scientific">Azobacteroides pseudotrichonymphae genomovar. CFP2</name>
    <dbReference type="NCBI Taxonomy" id="511995"/>
    <lineage>
        <taxon>Bacteria</taxon>
        <taxon>Pseudomonadati</taxon>
        <taxon>Bacteroidota</taxon>
        <taxon>Bacteroidia</taxon>
        <taxon>Bacteroidales</taxon>
        <taxon>Candidatus Azobacteroides</taxon>
    </lineage>
</organism>
<keyword id="KW-0963">Cytoplasm</keyword>
<keyword id="KW-0378">Hydrolase</keyword>
<keyword id="KW-0540">Nuclease</keyword>
<keyword id="KW-1185">Reference proteome</keyword>
<keyword id="KW-0690">Ribosome biogenesis</keyword>